<gene>
    <name evidence="5" type="primary">xptA</name>
    <name type="ORF">AN6784</name>
</gene>
<protein>
    <recommendedName>
        <fullName evidence="5">Xanthone prenyltransferase A</fullName>
        <ecNumber evidence="7">2.5.1.-</ecNumber>
    </recommendedName>
</protein>
<sequence>MLKHSSAATKENDSPKLKVLDIVSKLEPSLDHSHTHWWKLTSPQLALMLEAADYSIEKQFETLLFHYHWVVPYLGPKPDADGNFKWRSLVSDVGIPLEYSWKWDTATSGPDVRLTIEPINELSGTRVDPLNQAPSLELLHRLAEILPRLDVSWASHFLSTFYDHDKLKYIKESESETGMPLRSTMLVCFEFGRNGITTKTYMSPRKLGQQGFAPLSDYHSAIAALGPSCALDAVTEFLNNSPEGPHLSPFMLAVDNIIPCSSRLKLYFATPRTSYNSIREVLTLGGRLSTVTLESKLRAIHELVKAIMPFPPDLPDDADIPFPEQVLSPTVQDLAESSDMANQRPAFVAGYQYYFDIAPGASLPDIKFYIPIRKAQMNDQAVATGLTNWMRAQGRGAFCNAYTRVLEGLAGGRDLSKCHGLHTHICVMLKGNGEFDVTSYLAPGCK</sequence>
<keyword id="KW-1185">Reference proteome</keyword>
<keyword id="KW-0808">Transferase</keyword>
<organism>
    <name type="scientific">Emericella nidulans (strain FGSC A4 / ATCC 38163 / CBS 112.46 / NRRL 194 / M139)</name>
    <name type="common">Aspergillus nidulans</name>
    <dbReference type="NCBI Taxonomy" id="227321"/>
    <lineage>
        <taxon>Eukaryota</taxon>
        <taxon>Fungi</taxon>
        <taxon>Dikarya</taxon>
        <taxon>Ascomycota</taxon>
        <taxon>Pezizomycotina</taxon>
        <taxon>Eurotiomycetes</taxon>
        <taxon>Eurotiomycetidae</taxon>
        <taxon>Eurotiales</taxon>
        <taxon>Aspergillaceae</taxon>
        <taxon>Aspergillus</taxon>
        <taxon>Aspergillus subgen. Nidulantes</taxon>
    </lineage>
</organism>
<dbReference type="EC" id="2.5.1.-" evidence="7"/>
<dbReference type="EMBL" id="BN001301">
    <property type="protein sequence ID" value="CBF71451.1"/>
    <property type="molecule type" value="Genomic_DNA"/>
</dbReference>
<dbReference type="EMBL" id="AACD01000112">
    <property type="protein sequence ID" value="EAA58602.1"/>
    <property type="molecule type" value="Genomic_DNA"/>
</dbReference>
<dbReference type="RefSeq" id="XP_664388.1">
    <property type="nucleotide sequence ID" value="XM_659296.1"/>
</dbReference>
<dbReference type="SMR" id="Q5AY46"/>
<dbReference type="STRING" id="227321.Q5AY46"/>
<dbReference type="EnsemblFungi" id="CBF71451">
    <property type="protein sequence ID" value="CBF71451"/>
    <property type="gene ID" value="ANIA_06784"/>
</dbReference>
<dbReference type="KEGG" id="ani:ANIA_06784"/>
<dbReference type="VEuPathDB" id="FungiDB:AN6784"/>
<dbReference type="eggNOG" id="ENOG502S2XP">
    <property type="taxonomic scope" value="Eukaryota"/>
</dbReference>
<dbReference type="HOGENOM" id="CLU_037431_2_0_1"/>
<dbReference type="InParanoid" id="Q5AY46"/>
<dbReference type="OMA" id="KFYFQSP"/>
<dbReference type="OrthoDB" id="3354387at2759"/>
<dbReference type="Proteomes" id="UP000000560">
    <property type="component" value="Chromosome I"/>
</dbReference>
<dbReference type="GO" id="GO:0004659">
    <property type="term" value="F:prenyltransferase activity"/>
    <property type="evidence" value="ECO:0000315"/>
    <property type="project" value="AspGD"/>
</dbReference>
<dbReference type="GO" id="GO:0009820">
    <property type="term" value="P:alkaloid metabolic process"/>
    <property type="evidence" value="ECO:0007669"/>
    <property type="project" value="InterPro"/>
</dbReference>
<dbReference type="GO" id="GO:1900793">
    <property type="term" value="P:shamixanthone biosynthetic process"/>
    <property type="evidence" value="ECO:0000315"/>
    <property type="project" value="AspGD"/>
</dbReference>
<dbReference type="CDD" id="cd13929">
    <property type="entry name" value="PT-DMATS_CymD"/>
    <property type="match status" value="1"/>
</dbReference>
<dbReference type="InterPro" id="IPR033964">
    <property type="entry name" value="Aro_prenylTrfase"/>
</dbReference>
<dbReference type="InterPro" id="IPR017795">
    <property type="entry name" value="Aro_prenylTrfase_DMATS"/>
</dbReference>
<dbReference type="InterPro" id="IPR012148">
    <property type="entry name" value="DMATS-type_fun"/>
</dbReference>
<dbReference type="NCBIfam" id="TIGR03429">
    <property type="entry name" value="arom_pren_DMATS"/>
    <property type="match status" value="1"/>
</dbReference>
<dbReference type="PANTHER" id="PTHR40627">
    <property type="entry name" value="INDOLE PRENYLTRANSFERASE TDIB-RELATED"/>
    <property type="match status" value="1"/>
</dbReference>
<dbReference type="PANTHER" id="PTHR40627:SF4">
    <property type="entry name" value="PRENYLTRANSFERASE ASQH1-RELATED"/>
    <property type="match status" value="1"/>
</dbReference>
<dbReference type="Pfam" id="PF11991">
    <property type="entry name" value="Trp_DMAT"/>
    <property type="match status" value="1"/>
</dbReference>
<dbReference type="PIRSF" id="PIRSF000509">
    <property type="entry name" value="Trp_DMAT"/>
    <property type="match status" value="1"/>
</dbReference>
<dbReference type="SFLD" id="SFLDS00036">
    <property type="entry name" value="Aromatic_Prenyltransferase"/>
    <property type="match status" value="1"/>
</dbReference>
<dbReference type="SFLD" id="SFLDG01162">
    <property type="entry name" value="I"/>
    <property type="match status" value="1"/>
</dbReference>
<evidence type="ECO:0000250" key="1">
    <source>
        <dbReference type="UniProtKB" id="Q4WAW7"/>
    </source>
</evidence>
<evidence type="ECO:0000269" key="2">
    <source>
    </source>
</evidence>
<evidence type="ECO:0000269" key="3">
    <source>
    </source>
</evidence>
<evidence type="ECO:0000269" key="4">
    <source>
    </source>
</evidence>
<evidence type="ECO:0000303" key="5">
    <source>
    </source>
</evidence>
<evidence type="ECO:0000305" key="6"/>
<evidence type="ECO:0000305" key="7">
    <source>
    </source>
</evidence>
<proteinExistence type="inferred from homology"/>
<feature type="chain" id="PRO_0000441129" description="Xanthone prenyltransferase A">
    <location>
        <begin position="1"/>
        <end position="446"/>
    </location>
</feature>
<feature type="binding site" evidence="1">
    <location>
        <position position="113"/>
    </location>
    <ligand>
        <name>dimethylallyl diphosphate</name>
        <dbReference type="ChEBI" id="CHEBI:57623"/>
    </ligand>
</feature>
<feature type="binding site" evidence="1">
    <location>
        <position position="199"/>
    </location>
    <ligand>
        <name>dimethylallyl diphosphate</name>
        <dbReference type="ChEBI" id="CHEBI:57623"/>
    </ligand>
</feature>
<feature type="binding site" evidence="1">
    <location>
        <position position="201"/>
    </location>
    <ligand>
        <name>dimethylallyl diphosphate</name>
        <dbReference type="ChEBI" id="CHEBI:57623"/>
    </ligand>
</feature>
<feature type="binding site" evidence="1">
    <location>
        <position position="263"/>
    </location>
    <ligand>
        <name>dimethylallyl diphosphate</name>
        <dbReference type="ChEBI" id="CHEBI:57623"/>
    </ligand>
</feature>
<feature type="binding site" evidence="1">
    <location>
        <position position="265"/>
    </location>
    <ligand>
        <name>dimethylallyl diphosphate</name>
        <dbReference type="ChEBI" id="CHEBI:57623"/>
    </ligand>
</feature>
<feature type="binding site" evidence="1">
    <location>
        <position position="267"/>
    </location>
    <ligand>
        <name>dimethylallyl diphosphate</name>
        <dbReference type="ChEBI" id="CHEBI:57623"/>
    </ligand>
</feature>
<feature type="binding site" evidence="1">
    <location>
        <position position="369"/>
    </location>
    <ligand>
        <name>dimethylallyl diphosphate</name>
        <dbReference type="ChEBI" id="CHEBI:57623"/>
    </ligand>
</feature>
<feature type="binding site" evidence="1">
    <location>
        <position position="440"/>
    </location>
    <ligand>
        <name>dimethylallyl diphosphate</name>
        <dbReference type="ChEBI" id="CHEBI:57623"/>
    </ligand>
</feature>
<accession>Q5AY46</accession>
<accession>A0A1U8QK76</accession>
<accession>C8V273</accession>
<name>XPTA_EMENI</name>
<reference key="1">
    <citation type="journal article" date="2005" name="Nature">
        <title>Sequencing of Aspergillus nidulans and comparative analysis with A. fumigatus and A. oryzae.</title>
        <authorList>
            <person name="Galagan J.E."/>
            <person name="Calvo S.E."/>
            <person name="Cuomo C."/>
            <person name="Ma L.-J."/>
            <person name="Wortman J.R."/>
            <person name="Batzoglou S."/>
            <person name="Lee S.-I."/>
            <person name="Bastuerkmen M."/>
            <person name="Spevak C.C."/>
            <person name="Clutterbuck J."/>
            <person name="Kapitonov V."/>
            <person name="Jurka J."/>
            <person name="Scazzocchio C."/>
            <person name="Farman M.L."/>
            <person name="Butler J."/>
            <person name="Purcell S."/>
            <person name="Harris S."/>
            <person name="Braus G.H."/>
            <person name="Draht O."/>
            <person name="Busch S."/>
            <person name="D'Enfert C."/>
            <person name="Bouchier C."/>
            <person name="Goldman G.H."/>
            <person name="Bell-Pedersen D."/>
            <person name="Griffiths-Jones S."/>
            <person name="Doonan J.H."/>
            <person name="Yu J."/>
            <person name="Vienken K."/>
            <person name="Pain A."/>
            <person name="Freitag M."/>
            <person name="Selker E.U."/>
            <person name="Archer D.B."/>
            <person name="Penalva M.A."/>
            <person name="Oakley B.R."/>
            <person name="Momany M."/>
            <person name="Tanaka T."/>
            <person name="Kumagai T."/>
            <person name="Asai K."/>
            <person name="Machida M."/>
            <person name="Nierman W.C."/>
            <person name="Denning D.W."/>
            <person name="Caddick M.X."/>
            <person name="Hynes M."/>
            <person name="Paoletti M."/>
            <person name="Fischer R."/>
            <person name="Miller B.L."/>
            <person name="Dyer P.S."/>
            <person name="Sachs M.S."/>
            <person name="Osmani S.A."/>
            <person name="Birren B.W."/>
        </authorList>
    </citation>
    <scope>NUCLEOTIDE SEQUENCE [LARGE SCALE GENOMIC DNA]</scope>
    <source>
        <strain>FGSC A4 / ATCC 38163 / CBS 112.46 / NRRL 194 / M139</strain>
    </source>
</reference>
<reference key="2">
    <citation type="journal article" date="2009" name="Fungal Genet. Biol.">
        <title>The 2008 update of the Aspergillus nidulans genome annotation: a community effort.</title>
        <authorList>
            <person name="Wortman J.R."/>
            <person name="Gilsenan J.M."/>
            <person name="Joardar V."/>
            <person name="Deegan J."/>
            <person name="Clutterbuck J."/>
            <person name="Andersen M.R."/>
            <person name="Archer D."/>
            <person name="Bencina M."/>
            <person name="Braus G."/>
            <person name="Coutinho P."/>
            <person name="von Dohren H."/>
            <person name="Doonan J."/>
            <person name="Driessen A.J."/>
            <person name="Durek P."/>
            <person name="Espeso E."/>
            <person name="Fekete E."/>
            <person name="Flipphi M."/>
            <person name="Estrada C.G."/>
            <person name="Geysens S."/>
            <person name="Goldman G."/>
            <person name="de Groot P.W."/>
            <person name="Hansen K."/>
            <person name="Harris S.D."/>
            <person name="Heinekamp T."/>
            <person name="Helmstaedt K."/>
            <person name="Henrissat B."/>
            <person name="Hofmann G."/>
            <person name="Homan T."/>
            <person name="Horio T."/>
            <person name="Horiuchi H."/>
            <person name="James S."/>
            <person name="Jones M."/>
            <person name="Karaffa L."/>
            <person name="Karanyi Z."/>
            <person name="Kato M."/>
            <person name="Keller N."/>
            <person name="Kelly D.E."/>
            <person name="Kiel J.A."/>
            <person name="Kim J.M."/>
            <person name="van der Klei I.J."/>
            <person name="Klis F.M."/>
            <person name="Kovalchuk A."/>
            <person name="Krasevec N."/>
            <person name="Kubicek C.P."/>
            <person name="Liu B."/>
            <person name="Maccabe A."/>
            <person name="Meyer V."/>
            <person name="Mirabito P."/>
            <person name="Miskei M."/>
            <person name="Mos M."/>
            <person name="Mullins J."/>
            <person name="Nelson D.R."/>
            <person name="Nielsen J."/>
            <person name="Oakley B.R."/>
            <person name="Osmani S.A."/>
            <person name="Pakula T."/>
            <person name="Paszewski A."/>
            <person name="Paulsen I."/>
            <person name="Pilsyk S."/>
            <person name="Pocsi I."/>
            <person name="Punt P.J."/>
            <person name="Ram A.F."/>
            <person name="Ren Q."/>
            <person name="Robellet X."/>
            <person name="Robson G."/>
            <person name="Seiboth B."/>
            <person name="van Solingen P."/>
            <person name="Specht T."/>
            <person name="Sun J."/>
            <person name="Taheri-Talesh N."/>
            <person name="Takeshita N."/>
            <person name="Ussery D."/>
            <person name="vanKuyk P.A."/>
            <person name="Visser H."/>
            <person name="van de Vondervoort P.J."/>
            <person name="de Vries R.P."/>
            <person name="Walton J."/>
            <person name="Xiang X."/>
            <person name="Xiong Y."/>
            <person name="Zeng A.P."/>
            <person name="Brandt B.W."/>
            <person name="Cornell M.J."/>
            <person name="van den Hondel C.A."/>
            <person name="Visser J."/>
            <person name="Oliver S.G."/>
            <person name="Turner G."/>
        </authorList>
    </citation>
    <scope>GENOME REANNOTATION</scope>
    <source>
        <strain>FGSC A4 / ATCC 38163 / CBS 112.46 / NRRL 194 / M139</strain>
    </source>
</reference>
<reference key="3">
    <citation type="journal article" date="2011" name="J. Am. Chem. Soc.">
        <title>Genome-based deletion analysis reveals the prenyl xanthone biosynthesis pathway in Aspergillus nidulans.</title>
        <authorList>
            <person name="Sanchez J.F."/>
            <person name="Entwistle R."/>
            <person name="Hung J.H."/>
            <person name="Yaegashi J."/>
            <person name="Jain S."/>
            <person name="Chiang Y.M."/>
            <person name="Wang C.C."/>
            <person name="Oakley B.R."/>
        </authorList>
    </citation>
    <scope>FUNCTION</scope>
    <scope>DISRUPTION PHENOTYPE</scope>
    <scope>PATHWAY</scope>
</reference>
<reference key="4">
    <citation type="journal article" date="2012" name="ChemBioChem">
        <title>Genetic and biosynthetic studies of the fungal prenylated xanthone shamixanthone and related metabolites in Aspergillus spp. revisited.</title>
        <authorList>
            <person name="Simpson T.J."/>
        </authorList>
    </citation>
    <scope>FUNCTION</scope>
</reference>
<reference key="5">
    <citation type="journal article" date="2012" name="ChemBioChem">
        <title>New insights into the biosynthesis of prenylated xanthones: Xptb from Aspergillus nidulans catalyses an O-prenylation of xanthones.</title>
        <authorList>
            <person name="Pockrandt D."/>
            <person name="Ludwig L."/>
            <person name="Fan A."/>
            <person name="Koenig G.M."/>
            <person name="Li S.M."/>
        </authorList>
    </citation>
    <scope>FUNCTION</scope>
</reference>
<comment type="function">
    <text evidence="2 3 4">Xanthone prenyltransferase involved in the conversion of monodictyphenone to the prenyl xanthones such as emericellin, shamixanthone and epishamixanthone (PubMed:21351751, PubMed:22730213). Monodictyphenone is first converted to variecoxanthone A via a paeciloxanthone intermediate by the consecutive actions of the FAD-dependent monooxygenase mdpD and the xanthone prenyltransferase xptB (PubMed:21351751). XptB catalyzes regular O-prenylation at the hydroxy group of C-7 of the xanthone ring (PubMed:23150454). Variecoxanthone A is further prenylated to emericellin by xptA before being reduced to shamixanthone and epishamixanthone by the dehydrogenase xptC (PubMed:21351751).</text>
</comment>
<comment type="pathway">
    <text evidence="2">Secondary metabolite biosynthesis.</text>
</comment>
<comment type="disruption phenotype">
    <text evidence="2">Impairs the production of the xanthones shamixanthone, emericellin and epishamixanthone; and accumulates variecoxanthone A (PubMed:21351751).</text>
</comment>
<comment type="similarity">
    <text evidence="6">Belongs to the tryptophan dimethylallyltransferase family.</text>
</comment>